<protein>
    <recommendedName>
        <fullName>Beta-defensin 10</fullName>
        <shortName>BD-10</shortName>
    </recommendedName>
    <alternativeName>
        <fullName>Defensin, beta 10</fullName>
    </alternativeName>
</protein>
<reference key="1">
    <citation type="journal article" date="2005" name="Physiol. Genomics">
        <title>Cross-species analysis of the mammalian beta-defensin gene family: presence of syntenic gene clusters and preferential expression in the male reproductive tract.</title>
        <authorList>
            <person name="Patil A.A."/>
            <person name="Cai Y."/>
            <person name="Sang Y."/>
            <person name="Blecha F."/>
            <person name="Zhang G."/>
        </authorList>
    </citation>
    <scope>NUCLEOTIDE SEQUENCE [MRNA]</scope>
</reference>
<dbReference type="EMBL" id="AY621342">
    <property type="protein sequence ID" value="AAT51881.1"/>
    <property type="molecule type" value="mRNA"/>
</dbReference>
<dbReference type="RefSeq" id="NP_001032599.1">
    <property type="nucleotide sequence ID" value="NM_001037510.2"/>
</dbReference>
<dbReference type="SMR" id="Q32ZI1"/>
<dbReference type="FunCoup" id="Q32ZI1">
    <property type="interactions" value="53"/>
</dbReference>
<dbReference type="STRING" id="10116.ENSRNOP00000054867"/>
<dbReference type="PaxDb" id="10116-ENSRNOP00000054867"/>
<dbReference type="Ensembl" id="ENSRNOT00000058059.2">
    <property type="protein sequence ID" value="ENSRNOP00000054867.1"/>
    <property type="gene ID" value="ENSRNOG00000038148.2"/>
</dbReference>
<dbReference type="GeneID" id="641635"/>
<dbReference type="KEGG" id="rno:641635"/>
<dbReference type="UCSC" id="RGD:1562518">
    <property type="organism name" value="rat"/>
</dbReference>
<dbReference type="AGR" id="RGD:1562518"/>
<dbReference type="CTD" id="246085"/>
<dbReference type="RGD" id="1562518">
    <property type="gene designation" value="Defb10"/>
</dbReference>
<dbReference type="GeneTree" id="ENSGT00940000165558"/>
<dbReference type="HOGENOM" id="CLU_189296_1_0_1"/>
<dbReference type="InParanoid" id="Q32ZI1"/>
<dbReference type="OMA" id="CHYNICP"/>
<dbReference type="OrthoDB" id="9606199at2759"/>
<dbReference type="PhylomeDB" id="Q32ZI1"/>
<dbReference type="PRO" id="PR:Q32ZI1"/>
<dbReference type="Proteomes" id="UP000002494">
    <property type="component" value="Chromosome 16"/>
</dbReference>
<dbReference type="Bgee" id="ENSRNOG00000038148">
    <property type="expression patterns" value="Expressed in adult mammalian kidney and 2 other cell types or tissues"/>
</dbReference>
<dbReference type="GO" id="GO:0005615">
    <property type="term" value="C:extracellular space"/>
    <property type="evidence" value="ECO:0000318"/>
    <property type="project" value="GO_Central"/>
</dbReference>
<dbReference type="GO" id="GO:0031731">
    <property type="term" value="F:CCR6 chemokine receptor binding"/>
    <property type="evidence" value="ECO:0000318"/>
    <property type="project" value="GO_Central"/>
</dbReference>
<dbReference type="GO" id="GO:0050829">
    <property type="term" value="P:defense response to Gram-negative bacterium"/>
    <property type="evidence" value="ECO:0000318"/>
    <property type="project" value="GO_Central"/>
</dbReference>
<dbReference type="GO" id="GO:0050830">
    <property type="term" value="P:defense response to Gram-positive bacterium"/>
    <property type="evidence" value="ECO:0000318"/>
    <property type="project" value="GO_Central"/>
</dbReference>
<dbReference type="GO" id="GO:0002227">
    <property type="term" value="P:innate immune response in mucosa"/>
    <property type="evidence" value="ECO:0000318"/>
    <property type="project" value="GO_Central"/>
</dbReference>
<dbReference type="Gene3D" id="3.10.360.10">
    <property type="entry name" value="Antimicrobial Peptide, Beta-defensin 2, Chain A"/>
    <property type="match status" value="1"/>
</dbReference>
<dbReference type="InterPro" id="IPR001855">
    <property type="entry name" value="Defensin_beta-like"/>
</dbReference>
<dbReference type="PANTHER" id="PTHR21388:SF4">
    <property type="entry name" value="BETA-DEFENSIN 10-RELATED"/>
    <property type="match status" value="1"/>
</dbReference>
<dbReference type="PANTHER" id="PTHR21388">
    <property type="entry name" value="BETA-DEFENSIN-RELATED"/>
    <property type="match status" value="1"/>
</dbReference>
<dbReference type="Pfam" id="PF00711">
    <property type="entry name" value="Defensin_beta"/>
    <property type="match status" value="1"/>
</dbReference>
<dbReference type="SUPFAM" id="SSF57392">
    <property type="entry name" value="Defensin-like"/>
    <property type="match status" value="1"/>
</dbReference>
<proteinExistence type="inferred from homology"/>
<accession>Q32ZI1</accession>
<name>DFB10_RAT</name>
<feature type="signal peptide" evidence="2">
    <location>
        <begin position="1"/>
        <end position="23"/>
    </location>
</feature>
<feature type="chain" id="PRO_0000352695" description="Beta-defensin 10">
    <location>
        <begin position="24"/>
        <end position="71"/>
    </location>
</feature>
<feature type="disulfide bond" evidence="1">
    <location>
        <begin position="37"/>
        <end position="66"/>
    </location>
</feature>
<feature type="disulfide bond" evidence="1">
    <location>
        <begin position="44"/>
        <end position="59"/>
    </location>
</feature>
<feature type="disulfide bond" evidence="1">
    <location>
        <begin position="49"/>
        <end position="67"/>
    </location>
</feature>
<organism>
    <name type="scientific">Rattus norvegicus</name>
    <name type="common">Rat</name>
    <dbReference type="NCBI Taxonomy" id="10116"/>
    <lineage>
        <taxon>Eukaryota</taxon>
        <taxon>Metazoa</taxon>
        <taxon>Chordata</taxon>
        <taxon>Craniata</taxon>
        <taxon>Vertebrata</taxon>
        <taxon>Euteleostomi</taxon>
        <taxon>Mammalia</taxon>
        <taxon>Eutheria</taxon>
        <taxon>Euarchontoglires</taxon>
        <taxon>Glires</taxon>
        <taxon>Rodentia</taxon>
        <taxon>Myomorpha</taxon>
        <taxon>Muroidea</taxon>
        <taxon>Muridae</taxon>
        <taxon>Murinae</taxon>
        <taxon>Rattus</taxon>
    </lineage>
</organism>
<keyword id="KW-0044">Antibiotic</keyword>
<keyword id="KW-0929">Antimicrobial</keyword>
<keyword id="KW-0211">Defensin</keyword>
<keyword id="KW-1015">Disulfide bond</keyword>
<keyword id="KW-1185">Reference proteome</keyword>
<keyword id="KW-0964">Secreted</keyword>
<keyword id="KW-0732">Signal</keyword>
<gene>
    <name type="primary">Defb10</name>
</gene>
<comment type="function">
    <text evidence="1">Has antibacterial activity.</text>
</comment>
<comment type="subcellular location">
    <subcellularLocation>
        <location evidence="1">Secreted</location>
    </subcellularLocation>
</comment>
<comment type="similarity">
    <text evidence="3">Belongs to the beta-defensin family.</text>
</comment>
<sequence length="71" mass="8027">MKTLCSLLLIGCLLFSYDTPVVGELKHLGMTAETEWCRLFEGFCHDKNCPPPTSHVGSCHPEKRSCCKDRR</sequence>
<evidence type="ECO:0000250" key="1"/>
<evidence type="ECO:0000255" key="2"/>
<evidence type="ECO:0000305" key="3"/>